<name>UXUA_ESCF3</name>
<accession>B7LQG3</accession>
<evidence type="ECO:0000255" key="1">
    <source>
        <dbReference type="HAMAP-Rule" id="MF_00106"/>
    </source>
</evidence>
<feature type="chain" id="PRO_1000197932" description="Mannonate dehydratase">
    <location>
        <begin position="1"/>
        <end position="394"/>
    </location>
</feature>
<comment type="function">
    <text evidence="1">Catalyzes the dehydration of D-mannonate.</text>
</comment>
<comment type="catalytic activity">
    <reaction evidence="1">
        <text>D-mannonate = 2-dehydro-3-deoxy-D-gluconate + H2O</text>
        <dbReference type="Rhea" id="RHEA:20097"/>
        <dbReference type="ChEBI" id="CHEBI:15377"/>
        <dbReference type="ChEBI" id="CHEBI:17767"/>
        <dbReference type="ChEBI" id="CHEBI:57990"/>
        <dbReference type="EC" id="4.2.1.8"/>
    </reaction>
</comment>
<comment type="cofactor">
    <cofactor evidence="1">
        <name>Fe(2+)</name>
        <dbReference type="ChEBI" id="CHEBI:29033"/>
    </cofactor>
    <cofactor evidence="1">
        <name>Mn(2+)</name>
        <dbReference type="ChEBI" id="CHEBI:29035"/>
    </cofactor>
</comment>
<comment type="pathway">
    <text evidence="1">Carbohydrate metabolism; pentose and glucuronate interconversion.</text>
</comment>
<comment type="similarity">
    <text evidence="1">Belongs to the mannonate dehydratase family.</text>
</comment>
<keyword id="KW-0408">Iron</keyword>
<keyword id="KW-0456">Lyase</keyword>
<keyword id="KW-0464">Manganese</keyword>
<sequence>MEQTWRWYGPNDPVTLADVRQAGATGVVTALHHIPNGEVWSVEEILKRKAIVEDAGLVWSVVESVPIHEDIKTHTGNYEQWIANYQQTLRNLAQCGIRTVCYNFMPVLDWTRTDLEYVLPDGSKALRFDQIEFAAFELHILKRPGAEADYTEEEIAQAAERFATMSDEDKARLTRNIIAGLPGAEEGYTLDQFRKHLELYKDIDKAKLRENFAVFLKAIIPVAEEVGVRMAVHPDDPPRPILGLPRIVSTIEDMQWMVDTVNSMANGFTMCTGSYGVRADNDLVDMIKQFGPRIYFTHLRSTMREDNPKTFHEAAHLNGDVDMYEVVKAIVEEEHRRKAEGKEDLIPMRPDHGHQMLDDLKKKTNPGYSAIGRLKGLAEVRGVEMAIQRAFFSR</sequence>
<protein>
    <recommendedName>
        <fullName evidence="1">Mannonate dehydratase</fullName>
        <ecNumber evidence="1">4.2.1.8</ecNumber>
    </recommendedName>
    <alternativeName>
        <fullName evidence="1">D-mannonate hydro-lyase</fullName>
    </alternativeName>
</protein>
<organism>
    <name type="scientific">Escherichia fergusonii (strain ATCC 35469 / DSM 13698 / CCUG 18766 / IAM 14443 / JCM 21226 / LMG 7866 / NBRC 102419 / NCTC 12128 / CDC 0568-73)</name>
    <dbReference type="NCBI Taxonomy" id="585054"/>
    <lineage>
        <taxon>Bacteria</taxon>
        <taxon>Pseudomonadati</taxon>
        <taxon>Pseudomonadota</taxon>
        <taxon>Gammaproteobacteria</taxon>
        <taxon>Enterobacterales</taxon>
        <taxon>Enterobacteriaceae</taxon>
        <taxon>Escherichia</taxon>
    </lineage>
</organism>
<gene>
    <name evidence="1" type="primary">uxuA</name>
    <name type="ordered locus">EFER_3030</name>
</gene>
<dbReference type="EC" id="4.2.1.8" evidence="1"/>
<dbReference type="EMBL" id="CU928158">
    <property type="protein sequence ID" value="CAQ90523.1"/>
    <property type="molecule type" value="Genomic_DNA"/>
</dbReference>
<dbReference type="RefSeq" id="WP_000438604.1">
    <property type="nucleotide sequence ID" value="NC_011740.1"/>
</dbReference>
<dbReference type="SMR" id="B7LQG3"/>
<dbReference type="GeneID" id="75060350"/>
<dbReference type="KEGG" id="efe:EFER_3030"/>
<dbReference type="HOGENOM" id="CLU_058621_2_0_6"/>
<dbReference type="OrthoDB" id="9780250at2"/>
<dbReference type="UniPathway" id="UPA00246"/>
<dbReference type="Proteomes" id="UP000000745">
    <property type="component" value="Chromosome"/>
</dbReference>
<dbReference type="GO" id="GO:0008198">
    <property type="term" value="F:ferrous iron binding"/>
    <property type="evidence" value="ECO:0007669"/>
    <property type="project" value="TreeGrafter"/>
</dbReference>
<dbReference type="GO" id="GO:0030145">
    <property type="term" value="F:manganese ion binding"/>
    <property type="evidence" value="ECO:0007669"/>
    <property type="project" value="TreeGrafter"/>
</dbReference>
<dbReference type="GO" id="GO:0008927">
    <property type="term" value="F:mannonate dehydratase activity"/>
    <property type="evidence" value="ECO:0007669"/>
    <property type="project" value="UniProtKB-UniRule"/>
</dbReference>
<dbReference type="GO" id="GO:0042840">
    <property type="term" value="P:D-glucuronate catabolic process"/>
    <property type="evidence" value="ECO:0007669"/>
    <property type="project" value="TreeGrafter"/>
</dbReference>
<dbReference type="FunFam" id="3.20.20.150:FF:000004">
    <property type="entry name" value="Mannonate dehydratase"/>
    <property type="match status" value="1"/>
</dbReference>
<dbReference type="FunFam" id="3.20.20.150:FF:000005">
    <property type="entry name" value="Mannonate dehydratase"/>
    <property type="match status" value="1"/>
</dbReference>
<dbReference type="Gene3D" id="3.20.20.150">
    <property type="entry name" value="Divalent-metal-dependent TIM barrel enzymes"/>
    <property type="match status" value="2"/>
</dbReference>
<dbReference type="HAMAP" id="MF_00106">
    <property type="entry name" value="UxuA"/>
    <property type="match status" value="1"/>
</dbReference>
<dbReference type="InterPro" id="IPR004628">
    <property type="entry name" value="Man_deHydtase"/>
</dbReference>
<dbReference type="InterPro" id="IPR036237">
    <property type="entry name" value="Xyl_isomerase-like_sf"/>
</dbReference>
<dbReference type="NCBIfam" id="NF003027">
    <property type="entry name" value="PRK03906.1"/>
    <property type="match status" value="1"/>
</dbReference>
<dbReference type="NCBIfam" id="TIGR00695">
    <property type="entry name" value="uxuA"/>
    <property type="match status" value="1"/>
</dbReference>
<dbReference type="PANTHER" id="PTHR30387">
    <property type="entry name" value="MANNONATE DEHYDRATASE"/>
    <property type="match status" value="1"/>
</dbReference>
<dbReference type="PANTHER" id="PTHR30387:SF2">
    <property type="entry name" value="MANNONATE DEHYDRATASE"/>
    <property type="match status" value="1"/>
</dbReference>
<dbReference type="Pfam" id="PF03786">
    <property type="entry name" value="UxuA"/>
    <property type="match status" value="1"/>
</dbReference>
<dbReference type="PIRSF" id="PIRSF016049">
    <property type="entry name" value="Man_dehyd"/>
    <property type="match status" value="1"/>
</dbReference>
<dbReference type="SUPFAM" id="SSF51658">
    <property type="entry name" value="Xylose isomerase-like"/>
    <property type="match status" value="1"/>
</dbReference>
<reference key="1">
    <citation type="journal article" date="2009" name="PLoS Genet.">
        <title>Organised genome dynamics in the Escherichia coli species results in highly diverse adaptive paths.</title>
        <authorList>
            <person name="Touchon M."/>
            <person name="Hoede C."/>
            <person name="Tenaillon O."/>
            <person name="Barbe V."/>
            <person name="Baeriswyl S."/>
            <person name="Bidet P."/>
            <person name="Bingen E."/>
            <person name="Bonacorsi S."/>
            <person name="Bouchier C."/>
            <person name="Bouvet O."/>
            <person name="Calteau A."/>
            <person name="Chiapello H."/>
            <person name="Clermont O."/>
            <person name="Cruveiller S."/>
            <person name="Danchin A."/>
            <person name="Diard M."/>
            <person name="Dossat C."/>
            <person name="Karoui M.E."/>
            <person name="Frapy E."/>
            <person name="Garry L."/>
            <person name="Ghigo J.M."/>
            <person name="Gilles A.M."/>
            <person name="Johnson J."/>
            <person name="Le Bouguenec C."/>
            <person name="Lescat M."/>
            <person name="Mangenot S."/>
            <person name="Martinez-Jehanne V."/>
            <person name="Matic I."/>
            <person name="Nassif X."/>
            <person name="Oztas S."/>
            <person name="Petit M.A."/>
            <person name="Pichon C."/>
            <person name="Rouy Z."/>
            <person name="Ruf C.S."/>
            <person name="Schneider D."/>
            <person name="Tourret J."/>
            <person name="Vacherie B."/>
            <person name="Vallenet D."/>
            <person name="Medigue C."/>
            <person name="Rocha E.P.C."/>
            <person name="Denamur E."/>
        </authorList>
    </citation>
    <scope>NUCLEOTIDE SEQUENCE [LARGE SCALE GENOMIC DNA]</scope>
    <source>
        <strain>ATCC 35469 / DSM 13698 / BCRC 15582 / CCUG 18766 / IAM 14443 / JCM 21226 / LMG 7866 / NBRC 102419 / NCTC 12128 / CDC 0568-73</strain>
    </source>
</reference>
<proteinExistence type="inferred from homology"/>